<comment type="function">
    <text evidence="15">Seed storage protein. Accumulates during seed development and is hydrolyzed after germination to provide a carbon and nitrogen source for the developing seedling.</text>
</comment>
<comment type="subunit">
    <text evidence="16">The alpha-, alpha'-, and beta-subunits associate in various combinations to form trimeric proteins.</text>
</comment>
<comment type="subcellular location">
    <subcellularLocation>
        <location evidence="15">Vacuole</location>
        <location evidence="15">Aleurone grain</location>
    </subcellularLocation>
    <subcellularLocation>
        <location evidence="6">Endoplasmic reticulum</location>
    </subcellularLocation>
    <subcellularLocation>
        <location evidence="5 6 7 8">Protein storage vacuole</location>
    </subcellularLocation>
    <text evidence="5 6 7 8">Localizes in protein storage vacuoles in cotyledons of developing and mature beans (PubMed:12787246, PubMed:15447650, PubMed:16900322, PubMed:17181539). Synthesized and assembled into trimers in the endoplasmic reticulum, and transported to the protein storage vacuoles by the dense vesicles (PubMed:15447650).</text>
</comment>
<comment type="allergen">
    <text evidence="9 10">Causes an allergic reaction in human (PubMed:18996574). Binds to IgE of patients with severe allergic reactions (anaphylaxis) to soybean (PubMed:18996574). Causes an allergic reaction in rat (PubMed:17823539). Induces IgE-mediated passive cutaneous anaphylactic reactions coupled to mast cell degranulation and histamine release after intragastric absorption (PubMed:17823539).</text>
</comment>
<comment type="miscellaneous">
    <text evidence="4">A tridecapeptide (MITLAIPVNKPGR), called soymetide and derived from a trypsin digest of CG-1, stimulates phagocytosis of human neutrophils (PubMed:12681509). The N-terminal methionine residue is essential for its activity, and the N-terminal soymetide-4 (MITL) is the minimal structure required for phagocytosis stimulation (PubMed:12681509). Although not formylated at their N-termini, soymetides have a weak affinity for the N-formyl-methionyl-leucyl-phenylalanine (fMLP) receptor (PubMed:12681509).</text>
</comment>
<comment type="similarity">
    <text evidence="15">Belongs to the 7S seed storage protein family.</text>
</comment>
<comment type="sequence caution" evidence="15">
    <conflict type="miscellaneous discrepancy">
        <sequence resource="EMBL-CDS" id="AAB01374"/>
    </conflict>
    <text>Sequencing errors.</text>
</comment>
<gene>
    <name evidence="15" type="primary">CG-1</name>
    <name evidence="14" type="synonym">CGY-1</name>
    <name evidence="19" type="ORF">GLYMA_10G246300</name>
</gene>
<organism>
    <name type="scientific">Glycine max</name>
    <name type="common">Soybean</name>
    <name type="synonym">Glycine hispida</name>
    <dbReference type="NCBI Taxonomy" id="3847"/>
    <lineage>
        <taxon>Eukaryota</taxon>
        <taxon>Viridiplantae</taxon>
        <taxon>Streptophyta</taxon>
        <taxon>Embryophyta</taxon>
        <taxon>Tracheophyta</taxon>
        <taxon>Spermatophyta</taxon>
        <taxon>Magnoliopsida</taxon>
        <taxon>eudicotyledons</taxon>
        <taxon>Gunneridae</taxon>
        <taxon>Pentapetalae</taxon>
        <taxon>rosids</taxon>
        <taxon>fabids</taxon>
        <taxon>Fabales</taxon>
        <taxon>Fabaceae</taxon>
        <taxon>Papilionoideae</taxon>
        <taxon>50 kb inversion clade</taxon>
        <taxon>NPAAA clade</taxon>
        <taxon>indigoferoid/millettioid clade</taxon>
        <taxon>Phaseoleae</taxon>
        <taxon>Glycine</taxon>
        <taxon>Glycine subgen. Soja</taxon>
    </lineage>
</organism>
<dbReference type="EMBL" id="M13759">
    <property type="protein sequence ID" value="AAB01374.1"/>
    <property type="status" value="ALT_SEQ"/>
    <property type="molecule type" value="Genomic_DNA"/>
</dbReference>
<dbReference type="EMBL" id="AB113351">
    <property type="protein sequence ID" value="BAC78524.1"/>
    <property type="molecule type" value="mRNA"/>
</dbReference>
<dbReference type="EMBL" id="GU723691">
    <property type="protein sequence ID" value="ADD38965.1"/>
    <property type="molecule type" value="Genomic_DNA"/>
</dbReference>
<dbReference type="EMBL" id="AB197784">
    <property type="protein sequence ID" value="BAE02726.1"/>
    <property type="molecule type" value="mRNA"/>
</dbReference>
<dbReference type="EMBL" id="AB234094">
    <property type="protein sequence ID" value="BAE44298.1"/>
    <property type="molecule type" value="mRNA"/>
</dbReference>
<dbReference type="EMBL" id="AB610665">
    <property type="protein sequence ID" value="BAK53445.1"/>
    <property type="molecule type" value="Genomic_DNA"/>
</dbReference>
<dbReference type="EMBL" id="CM000843">
    <property type="protein sequence ID" value="KRH35498.1"/>
    <property type="molecule type" value="Genomic_DNA"/>
</dbReference>
<dbReference type="EMBL" id="ACUP02006681">
    <property type="status" value="NOT_ANNOTATED_CDS"/>
    <property type="molecule type" value="Genomic_DNA"/>
</dbReference>
<dbReference type="EMBL" id="J01290">
    <property type="status" value="NOT_ANNOTATED_CDS"/>
    <property type="molecule type" value="mRNA"/>
</dbReference>
<dbReference type="EMBL" id="J01293">
    <property type="status" value="NOT_ANNOTATED_CDS"/>
    <property type="molecule type" value="Genomic_DNA"/>
</dbReference>
<dbReference type="PIR" id="B24810">
    <property type="entry name" value="B24810"/>
</dbReference>
<dbReference type="RefSeq" id="NP_001237316.2">
    <property type="nucleotide sequence ID" value="NM_001250387.2"/>
</dbReference>
<dbReference type="PDB" id="1UIK">
    <property type="method" value="X-ray"/>
    <property type="resolution" value="2.30 A"/>
    <property type="chains" value="A/B/C=204-621"/>
</dbReference>
<dbReference type="PDBsum" id="1UIK"/>
<dbReference type="SMR" id="P11827"/>
<dbReference type="FunCoup" id="P11827">
    <property type="interactions" value="384"/>
</dbReference>
<dbReference type="STRING" id="3847.P11827"/>
<dbReference type="Allergome" id="5816">
    <property type="allergen name" value="Gly m 5"/>
</dbReference>
<dbReference type="TCDB" id="1.C.121.1.1">
    <property type="family name" value="the soybean glycinin-derived pore-forming peptide (sgpp) family"/>
</dbReference>
<dbReference type="GlyCosmos" id="P11827">
    <property type="glycosylation" value="2 sites, No reported glycans"/>
</dbReference>
<dbReference type="PaxDb" id="3847-GLYMA10G39150.1"/>
<dbReference type="EnsemblPlants" id="KRH35498">
    <property type="protein sequence ID" value="KRH35498"/>
    <property type="gene ID" value="GLYMA_10G246300"/>
</dbReference>
<dbReference type="GeneID" id="548007"/>
<dbReference type="Gramene" id="KRH35498">
    <property type="protein sequence ID" value="KRH35498"/>
    <property type="gene ID" value="GLYMA_10G246300"/>
</dbReference>
<dbReference type="KEGG" id="gmx:548007"/>
<dbReference type="eggNOG" id="ENOG502QQEP">
    <property type="taxonomic scope" value="Eukaryota"/>
</dbReference>
<dbReference type="HOGENOM" id="CLU_018703_0_1_1"/>
<dbReference type="InParanoid" id="P11827"/>
<dbReference type="OMA" id="ENPWRGE"/>
<dbReference type="OrthoDB" id="1425232at2759"/>
<dbReference type="EvolutionaryTrace" id="P11827"/>
<dbReference type="Proteomes" id="UP000008827">
    <property type="component" value="Chromosome 10"/>
</dbReference>
<dbReference type="GO" id="GO:0033095">
    <property type="term" value="C:aleurone grain"/>
    <property type="evidence" value="ECO:0007669"/>
    <property type="project" value="UniProtKB-SubCell"/>
</dbReference>
<dbReference type="GO" id="GO:0005783">
    <property type="term" value="C:endoplasmic reticulum"/>
    <property type="evidence" value="ECO:0000314"/>
    <property type="project" value="UniProtKB"/>
</dbReference>
<dbReference type="GO" id="GO:0000326">
    <property type="term" value="C:protein storage vacuole"/>
    <property type="evidence" value="ECO:0000314"/>
    <property type="project" value="UniProtKB"/>
</dbReference>
<dbReference type="GO" id="GO:0045735">
    <property type="term" value="F:nutrient reservoir activity"/>
    <property type="evidence" value="ECO:0007669"/>
    <property type="project" value="UniProtKB-KW"/>
</dbReference>
<dbReference type="CDD" id="cd02245">
    <property type="entry name" value="cupin_7S_vicilin-like_C"/>
    <property type="match status" value="1"/>
</dbReference>
<dbReference type="CDD" id="cd02244">
    <property type="entry name" value="cupin_7S_vicilin-like_N"/>
    <property type="match status" value="1"/>
</dbReference>
<dbReference type="FunFam" id="2.60.120.10:FF:000162">
    <property type="entry name" value="Beta-conglycinin beta subunit 1"/>
    <property type="match status" value="1"/>
</dbReference>
<dbReference type="FunFam" id="2.60.120.10:FF:000181">
    <property type="entry name" value="Beta-conglycinin beta subunit 1"/>
    <property type="match status" value="1"/>
</dbReference>
<dbReference type="Gene3D" id="2.60.120.10">
    <property type="entry name" value="Jelly Rolls"/>
    <property type="match status" value="2"/>
</dbReference>
<dbReference type="InterPro" id="IPR006045">
    <property type="entry name" value="Cupin_1"/>
</dbReference>
<dbReference type="InterPro" id="IPR014710">
    <property type="entry name" value="RmlC-like_jellyroll"/>
</dbReference>
<dbReference type="InterPro" id="IPR011051">
    <property type="entry name" value="RmlC_Cupin_sf"/>
</dbReference>
<dbReference type="InterPro" id="IPR050253">
    <property type="entry name" value="Seed_Storage-Functional"/>
</dbReference>
<dbReference type="PANTHER" id="PTHR31189">
    <property type="entry name" value="OS03G0336100 PROTEIN-RELATED"/>
    <property type="match status" value="1"/>
</dbReference>
<dbReference type="PANTHER" id="PTHR31189:SF41">
    <property type="entry name" value="VICILIN C72"/>
    <property type="match status" value="1"/>
</dbReference>
<dbReference type="Pfam" id="PF00190">
    <property type="entry name" value="Cupin_1"/>
    <property type="match status" value="2"/>
</dbReference>
<dbReference type="SMART" id="SM00835">
    <property type="entry name" value="Cupin_1"/>
    <property type="match status" value="2"/>
</dbReference>
<dbReference type="SUPFAM" id="SSF51182">
    <property type="entry name" value="RmlC-like cupins"/>
    <property type="match status" value="2"/>
</dbReference>
<proteinExistence type="evidence at protein level"/>
<feature type="signal peptide" evidence="1">
    <location>
        <begin position="1"/>
        <end position="24"/>
    </location>
</feature>
<feature type="propeptide" id="PRO_0000032188" evidence="18">
    <location>
        <begin position="25"/>
        <end position="62"/>
    </location>
</feature>
<feature type="chain" id="PRO_0000032189" description="Beta-conglycinin alpha' subunit">
    <location>
        <begin position="63"/>
        <end position="621"/>
    </location>
</feature>
<feature type="domain" description="Cupin type-1 1" evidence="1">
    <location>
        <begin position="212"/>
        <end position="370"/>
    </location>
</feature>
<feature type="domain" description="Cupin type-1 2" evidence="1">
    <location>
        <begin position="422"/>
        <end position="583"/>
    </location>
</feature>
<feature type="region of interest" description="Disordered" evidence="3">
    <location>
        <begin position="64"/>
        <end position="214"/>
    </location>
</feature>
<feature type="region of interest" description="Necessary for sorting to protein storage vacuole" evidence="5 7">
    <location>
        <begin position="612"/>
        <end position="621"/>
    </location>
</feature>
<feature type="compositionally biased region" description="Basic and acidic residues" evidence="3">
    <location>
        <begin position="80"/>
        <end position="92"/>
    </location>
</feature>
<feature type="compositionally biased region" description="Basic and acidic residues" evidence="3">
    <location>
        <begin position="111"/>
        <end position="173"/>
    </location>
</feature>
<feature type="compositionally biased region" description="Acidic residues" evidence="3">
    <location>
        <begin position="174"/>
        <end position="196"/>
    </location>
</feature>
<feature type="glycosylation site" description="N-linked (GlcNAc...) asparagine" evidence="2">
    <location>
        <position position="277"/>
    </location>
</feature>
<feature type="glycosylation site" description="N-linked (GlcNAc...) asparagine" evidence="2">
    <location>
        <position position="533"/>
    </location>
</feature>
<feature type="disulfide bond" description="Interchain (with C-68 in alpha subunit)" evidence="17">
    <location>
        <position position="69"/>
    </location>
</feature>
<feature type="sequence conflict" description="In Ref. 2; BAC78524." evidence="15" ref="2">
    <original>H</original>
    <variation>R</variation>
    <location>
        <position position="112"/>
    </location>
</feature>
<feature type="helix" evidence="20">
    <location>
        <begin position="216"/>
        <end position="218"/>
    </location>
</feature>
<feature type="strand" evidence="20">
    <location>
        <begin position="219"/>
        <end position="224"/>
    </location>
</feature>
<feature type="strand" evidence="20">
    <location>
        <begin position="226"/>
        <end position="233"/>
    </location>
</feature>
<feature type="helix" evidence="20">
    <location>
        <begin position="241"/>
        <end position="246"/>
    </location>
</feature>
<feature type="strand" evidence="20">
    <location>
        <begin position="250"/>
        <end position="256"/>
    </location>
</feature>
<feature type="strand" evidence="20">
    <location>
        <begin position="258"/>
        <end position="285"/>
    </location>
</feature>
<feature type="strand" evidence="20">
    <location>
        <begin position="290"/>
        <end position="296"/>
    </location>
</feature>
<feature type="strand" evidence="20">
    <location>
        <begin position="299"/>
        <end position="303"/>
    </location>
</feature>
<feature type="strand" evidence="20">
    <location>
        <begin position="308"/>
        <end position="313"/>
    </location>
</feature>
<feature type="strand" evidence="20">
    <location>
        <begin position="320"/>
        <end position="331"/>
    </location>
</feature>
<feature type="strand" evidence="20">
    <location>
        <begin position="337"/>
        <end position="339"/>
    </location>
</feature>
<feature type="helix" evidence="20">
    <location>
        <begin position="349"/>
        <end position="352"/>
    </location>
</feature>
<feature type="helix" evidence="20">
    <location>
        <begin position="355"/>
        <end position="362"/>
    </location>
</feature>
<feature type="helix" evidence="20">
    <location>
        <begin position="366"/>
        <end position="372"/>
    </location>
</feature>
<feature type="strand" evidence="20">
    <location>
        <begin position="390"/>
        <end position="394"/>
    </location>
</feature>
<feature type="helix" evidence="20">
    <location>
        <begin position="397"/>
        <end position="403"/>
    </location>
</feature>
<feature type="turn" evidence="20">
    <location>
        <begin position="404"/>
        <end position="406"/>
    </location>
</feature>
<feature type="helix" evidence="20">
    <location>
        <begin position="412"/>
        <end position="416"/>
    </location>
</feature>
<feature type="strand" evidence="20">
    <location>
        <begin position="418"/>
        <end position="420"/>
    </location>
</feature>
<feature type="strand" evidence="20">
    <location>
        <begin position="430"/>
        <end position="441"/>
    </location>
</feature>
<feature type="turn" evidence="20">
    <location>
        <begin position="443"/>
        <end position="445"/>
    </location>
</feature>
<feature type="helix" evidence="20">
    <location>
        <begin position="447"/>
        <end position="452"/>
    </location>
</feature>
<feature type="strand" evidence="20">
    <location>
        <begin position="454"/>
        <end position="461"/>
    </location>
</feature>
<feature type="strand" evidence="20">
    <location>
        <begin position="465"/>
        <end position="474"/>
    </location>
</feature>
<feature type="strand" evidence="20">
    <location>
        <begin position="476"/>
        <end position="484"/>
    </location>
</feature>
<feature type="strand" evidence="20">
    <location>
        <begin position="486"/>
        <end position="492"/>
    </location>
</feature>
<feature type="strand" evidence="20">
    <location>
        <begin position="510"/>
        <end position="516"/>
    </location>
</feature>
<feature type="strand" evidence="20">
    <location>
        <begin position="521"/>
        <end position="524"/>
    </location>
</feature>
<feature type="strand" evidence="20">
    <location>
        <begin position="530"/>
        <end position="545"/>
    </location>
</feature>
<feature type="strand" evidence="20">
    <location>
        <begin position="552"/>
        <end position="561"/>
    </location>
</feature>
<feature type="helix" evidence="20">
    <location>
        <begin position="562"/>
        <end position="565"/>
    </location>
</feature>
<feature type="helix" evidence="20">
    <location>
        <begin position="568"/>
        <end position="574"/>
    </location>
</feature>
<feature type="strand" evidence="20">
    <location>
        <begin position="575"/>
        <end position="577"/>
    </location>
</feature>
<feature type="helix" evidence="20">
    <location>
        <begin position="579"/>
        <end position="588"/>
    </location>
</feature>
<feature type="strand" evidence="20">
    <location>
        <begin position="593"/>
        <end position="596"/>
    </location>
</feature>
<protein>
    <recommendedName>
        <fullName evidence="13">Beta-conglycinin alpha' subunit</fullName>
        <shortName evidence="12">CG-alpha'-1</shortName>
    </recommendedName>
    <alternativeName>
        <fullName evidence="11">Beta-conglycinin alpha prime subunit</fullName>
    </alternativeName>
    <allergenName evidence="15">Gly m 5</allergenName>
</protein>
<accession>P11827</accession>
<accession>Q4LER6</accession>
<accession>Q7XXT2</accession>
<keyword id="KW-0002">3D-structure</keyword>
<keyword id="KW-0020">Allergen</keyword>
<keyword id="KW-0903">Direct protein sequencing</keyword>
<keyword id="KW-1015">Disulfide bond</keyword>
<keyword id="KW-0256">Endoplasmic reticulum</keyword>
<keyword id="KW-0325">Glycoprotein</keyword>
<keyword id="KW-1185">Reference proteome</keyword>
<keyword id="KW-0708">Seed storage protein</keyword>
<keyword id="KW-0732">Signal</keyword>
<keyword id="KW-0758">Storage protein</keyword>
<keyword id="KW-0926">Vacuole</keyword>
<reference key="1">
    <citation type="journal article" date="1986" name="J. Biol. Chem.">
        <title>The glycosylated seed storage proteins of Glycine max and Phaseolus vulgaris. Structural homologies of genes and proteins.</title>
        <authorList>
            <person name="Doyle J.J."/>
            <person name="Schuler M.A."/>
            <person name="Godette W.D."/>
            <person name="Zenger V."/>
            <person name="Beachy R.N."/>
            <person name="Slightom J.L."/>
        </authorList>
    </citation>
    <scope>NUCLEOTIDE SEQUENCE [GENOMIC DNA]</scope>
</reference>
<reference key="2">
    <citation type="journal article" date="2007" name="FEBS J.">
        <title>Protein disulfide isomerase family proteins involved in soybean protein biogenesis.</title>
        <authorList>
            <person name="Wadahama H."/>
            <person name="Kamauchi S."/>
            <person name="Ishimoto M."/>
            <person name="Kawada T."/>
            <person name="Urade R."/>
        </authorList>
    </citation>
    <scope>NUCLEOTIDE SEQUENCE [MRNA]</scope>
    <scope>SUBCELLULAR LOCATION</scope>
</reference>
<reference key="3">
    <citation type="journal article" date="2011" name="Euphytica">
        <title>The development of a co-dominant marker for the beta-conglycinin alpha' subunit in soybeans.</title>
        <authorList>
            <person name="Kim S.-I."/>
            <person name="Kim M.Y."/>
            <person name="Van K."/>
            <person name="Lee Y.-H."/>
            <person name="Kim H.S."/>
            <person name="Cai C.M."/>
            <person name="Park B.-S."/>
            <person name="Seo H.-S."/>
            <person name="Lee S.-H."/>
        </authorList>
        <dbReference type="AGRICOLA" id="IND44467547"/>
    </citation>
    <scope>NUCLEOTIDE SEQUENCE [GENOMIC DNA]</scope>
</reference>
<reference key="4">
    <citation type="journal article" date="2012" name="Plant Mol. Biol.">
        <title>The beta-conglycinin deficiency in wild soybean is associated with the tail-to-tail inverted repeat of the alpha-subunit genes.</title>
        <authorList>
            <person name="Tsubokura Y."/>
            <person name="Hajika M."/>
            <person name="Kanamori H."/>
            <person name="Xia Z."/>
            <person name="Watanabe S."/>
            <person name="Kaga A."/>
            <person name="Katayose Y."/>
            <person name="Ishimoto M."/>
            <person name="Harada K."/>
        </authorList>
    </citation>
    <scope>NUCLEOTIDE SEQUENCE [GENOMIC DNA / MRNA]</scope>
</reference>
<reference key="5">
    <citation type="journal article" date="2010" name="Nature">
        <title>Genome sequence of the palaeopolyploid soybean.</title>
        <authorList>
            <person name="Schmutz J."/>
            <person name="Cannon S.B."/>
            <person name="Schlueter J."/>
            <person name="Ma J."/>
            <person name="Mitros T."/>
            <person name="Nelson W."/>
            <person name="Hyten D.L."/>
            <person name="Song Q."/>
            <person name="Thelen J.J."/>
            <person name="Cheng J."/>
            <person name="Xu D."/>
            <person name="Hellsten U."/>
            <person name="May G.D."/>
            <person name="Yu Y."/>
            <person name="Sakurai T."/>
            <person name="Umezawa T."/>
            <person name="Bhattacharyya M.K."/>
            <person name="Sandhu D."/>
            <person name="Valliyodan B."/>
            <person name="Lindquist E."/>
            <person name="Peto M."/>
            <person name="Grant D."/>
            <person name="Shu S."/>
            <person name="Goodstein D."/>
            <person name="Barry K."/>
            <person name="Futrell-Griggs M."/>
            <person name="Abernathy B."/>
            <person name="Du J."/>
            <person name="Tian Z."/>
            <person name="Zhu L."/>
            <person name="Gill N."/>
            <person name="Joshi T."/>
            <person name="Libault M."/>
            <person name="Sethuraman A."/>
            <person name="Zhang X.-C."/>
            <person name="Shinozaki K."/>
            <person name="Nguyen H.T."/>
            <person name="Wing R.A."/>
            <person name="Cregan P."/>
            <person name="Specht J."/>
            <person name="Grimwood J."/>
            <person name="Rokhsar D."/>
            <person name="Stacey G."/>
            <person name="Shoemaker R.C."/>
            <person name="Jackson S.A."/>
        </authorList>
    </citation>
    <scope>NUCLEOTIDE SEQUENCE [LARGE SCALE GENOMIC DNA]</scope>
    <source>
        <strain>cv. Williams 82</strain>
    </source>
</reference>
<reference key="6">
    <citation type="journal article" date="1987" name="Phytochemistry">
        <title>Structural homology among the major 7s globulin subunits of soybean seed storage proteins.</title>
        <authorList>
            <person name="Hirano H."/>
            <person name="Kagawa H."/>
            <person name="Kamata Y."/>
            <person name="Yamauchi F."/>
        </authorList>
    </citation>
    <scope>PROTEIN SEQUENCE OF 63-75</scope>
    <source>
        <strain>cv. Raiden</strain>
    </source>
</reference>
<reference key="7">
    <citation type="journal article" date="1982" name="Nucleic Acids Res.">
        <title>Structural sequences are conserved in the genes coding for the alpha, alpha' and beta-subunits of the soybean 7S seed storage protein.</title>
        <authorList>
            <person name="Schuler M.A."/>
            <person name="Ladin B.F."/>
            <person name="Pollaco J.C."/>
            <person name="Freyer G."/>
            <person name="Beachy R.N."/>
        </authorList>
    </citation>
    <scope>NUCLEOTIDE SEQUENCE [MRNA] OF 321-621</scope>
</reference>
<reference key="8">
    <citation type="journal article" date="1982" name="Nucleic Acids Res.">
        <title>Closely related families of genes code for the alpha and alpha' subunits of the soybean 7S storage protein complex.</title>
        <authorList>
            <person name="Schuler M.A."/>
            <person name="Schmitt E.S."/>
            <person name="Beachy R.N."/>
        </authorList>
    </citation>
    <scope>NUCLEOTIDE SEQUENCE [GENOMIC DNA] OF 342-621</scope>
</reference>
<reference key="9">
    <citation type="journal article" date="2003" name="FEBS Lett.">
        <title>Soymetide, an immunostimulating peptide derived from soybean beta-conglycinin, is an fMLP agonist.</title>
        <authorList>
            <person name="Tsuruki T."/>
            <person name="Kishi K."/>
            <person name="Takahashi M."/>
            <person name="Tanaka M."/>
            <person name="Matsukawa T."/>
            <person name="Yoshikawa M."/>
        </authorList>
    </citation>
    <scope>FUNCTION</scope>
</reference>
<reference key="10">
    <citation type="journal article" date="2003" name="Plant J.">
        <title>A C-terminal sequence of soybean beta-conglycinin alpha' subunit acts as a vacuolar sorting determinant in seed cells.</title>
        <authorList>
            <person name="Nishizawa K."/>
            <person name="Maruyama N."/>
            <person name="Satoh R."/>
            <person name="Fuchikami Y."/>
            <person name="Higasa T."/>
            <person name="Utsumi S."/>
        </authorList>
    </citation>
    <scope>SUBCELLULAR LOCATION</scope>
</reference>
<reference key="11">
    <citation type="journal article" date="2004" name="Plant J.">
        <title>The composition of newly synthesized proteins in the endoplasmic reticulum determines the transport pathways of soybean seed storage proteins.</title>
        <authorList>
            <person name="Mori T."/>
            <person name="Maruyama N."/>
            <person name="Nishizawa K."/>
            <person name="Higasa T."/>
            <person name="Yagasaki K."/>
            <person name="Ishimoto M."/>
            <person name="Utsumi S."/>
        </authorList>
    </citation>
    <scope>SUBUNIT</scope>
    <scope>SUBCELLULAR LOCATION</scope>
</reference>
<reference key="12">
    <citation type="journal article" date="2006" name="Plant Mol. Biol.">
        <title>The C-terminal region of alpha' subunit of soybean beta-conglycinin contains two types of vacuolar sorting determinants.</title>
        <authorList>
            <person name="Nishizawa K."/>
            <person name="Maruyama N."/>
            <person name="Utsumi S."/>
        </authorList>
    </citation>
    <scope>SUBCELLULAR LOCATION</scope>
</reference>
<reference key="13">
    <citation type="journal article" date="2008" name="Int. Arch. Allergy Immunol.">
        <title>Recombinant soybean protein beta-conglycinin alpha'-subunit expression and induced hypersensitivity reaction in rats.</title>
        <authorList>
            <person name="Guo P."/>
            <person name="Piao X."/>
            <person name="Cao Y."/>
            <person name="Ou D."/>
            <person name="Li D."/>
        </authorList>
    </citation>
    <scope>ALLERGEN</scope>
</reference>
<reference key="14">
    <citation type="journal article" date="2009" name="J. Allergy Clin. Immunol.">
        <title>Soybean (Glycine max) allergy in Europe: Gly m 5 (beta-conglycinin) and Gly m 6 (glycinin) are potential diagnostic markers for severe allergic reactions to soy.</title>
        <authorList>
            <person name="Holzhauser T."/>
            <person name="Wackermann O."/>
            <person name="Ballmer-Weber B.K."/>
            <person name="Bindslev-Jensen C."/>
            <person name="Scibilia J."/>
            <person name="Perono-Garoffo L."/>
            <person name="Utsumi S."/>
            <person name="Poulsen L.K."/>
            <person name="Vieths S."/>
        </authorList>
    </citation>
    <scope>ALLERGEN</scope>
</reference>
<reference key="15">
    <citation type="journal article" date="2012" name="Plant Physiol.">
        <title>Accumulation of beta-conglycinin in soybean cotyledon through the formation of disulfide bonds between alpha'- and alpha-subunits.</title>
        <authorList>
            <person name="Wadahama H."/>
            <person name="Iwasaki K."/>
            <person name="Matsusaki M."/>
            <person name="Nishizawa K."/>
            <person name="Ishimoto M."/>
            <person name="Arisaka F."/>
            <person name="Takagi K."/>
            <person name="Urade R."/>
        </authorList>
    </citation>
    <scope>DISULFIDE BOND</scope>
</reference>
<reference key="16">
    <citation type="journal article" date="2004" name="Acta Crystallogr. D">
        <title>Structure of the core region of the soybean beta-conglycinin alpha' subunit.</title>
        <authorList>
            <person name="Maruyama Y."/>
            <person name="Maruyama N."/>
            <person name="Mikami B."/>
            <person name="Utsumi S."/>
        </authorList>
    </citation>
    <scope>X-RAY CRYSTALLOGRAPHY (2.30 ANGSTROMS) OF 204-621</scope>
</reference>
<evidence type="ECO:0000255" key="1"/>
<evidence type="ECO:0000255" key="2">
    <source>
        <dbReference type="PROSITE-ProRule" id="PRU00498"/>
    </source>
</evidence>
<evidence type="ECO:0000256" key="3">
    <source>
        <dbReference type="SAM" id="MobiDB-lite"/>
    </source>
</evidence>
<evidence type="ECO:0000269" key="4">
    <source>
    </source>
</evidence>
<evidence type="ECO:0000269" key="5">
    <source>
    </source>
</evidence>
<evidence type="ECO:0000269" key="6">
    <source>
    </source>
</evidence>
<evidence type="ECO:0000269" key="7">
    <source>
    </source>
</evidence>
<evidence type="ECO:0000269" key="8">
    <source>
    </source>
</evidence>
<evidence type="ECO:0000269" key="9">
    <source>
    </source>
</evidence>
<evidence type="ECO:0000269" key="10">
    <source>
    </source>
</evidence>
<evidence type="ECO:0000303" key="11">
    <source>
    </source>
</evidence>
<evidence type="ECO:0000303" key="12">
    <source>
    </source>
</evidence>
<evidence type="ECO:0000303" key="13">
    <source>
    </source>
</evidence>
<evidence type="ECO:0000303" key="14">
    <source ref="3"/>
</evidence>
<evidence type="ECO:0000305" key="15"/>
<evidence type="ECO:0000305" key="16">
    <source>
    </source>
</evidence>
<evidence type="ECO:0000305" key="17">
    <source>
    </source>
</evidence>
<evidence type="ECO:0000305" key="18">
    <source ref="6"/>
</evidence>
<evidence type="ECO:0000312" key="19">
    <source>
        <dbReference type="EMBL" id="KRH35498.1"/>
    </source>
</evidence>
<evidence type="ECO:0007829" key="20">
    <source>
        <dbReference type="PDB" id="1UIK"/>
    </source>
</evidence>
<name>GLCAP_SOYBN</name>
<sequence>MMRARFPLLLLGVVFLASVSVSFGIAYWEKQNPSHNKCLRSCNSEKDSYRNQACHARCNLLKVEEEEECEEGQIPRPRPQHPERERQQHGEKEEDEGEQPRPFPFPRPRQPHQEEEHEQKEEHEWHRKEEKHGGKGSEEEQDEREHPRPHQPHQKEEEKHEWQHKQEKHQGKESEEEEEDQDEDEEQDKESQESEGSESQREPRRHKNKNPFHFNSKRFQTLFKNQYGHVRVLQRFNKRSQQLQNLRDYRILEFNSKPNTLLLPHHADADYLIVILNGTAILTLVNNDDRDSYNLQSGDALRVPAGTTYYVVNPDNDENLRMITLAIPVNKPGRFESFFLSSTQAQQSYLQGFSKNILEASYDTKFEEINKVLFGREEGQQQGEERLQESVIVEISKKQIRELSKHAKSSSRKTISSEDKPFNLRSRDPIYSNKLGKLFEITPEKNPQLRDLDVFLSVVDMNEGALFLPHFNSKAIVVLVINEGEANIELVGIKEQQQRQQQEEQPLEVRKYRAELSEQDIFVIPAGYPVVVNATSDLNFFAFGINAENNQRNFLAGSKDNVISQIPSQVQELAFPGSAKDIENLIKSQSESYFVDAQPQQKEEGNKGRKGPLSSILRAFY</sequence>